<proteinExistence type="inferred from homology"/>
<evidence type="ECO:0000255" key="1">
    <source>
        <dbReference type="HAMAP-Rule" id="MF_01338"/>
    </source>
</evidence>
<gene>
    <name evidence="1" type="primary">rbcL</name>
</gene>
<keyword id="KW-0113">Calvin cycle</keyword>
<keyword id="KW-0120">Carbon dioxide fixation</keyword>
<keyword id="KW-0150">Chloroplast</keyword>
<keyword id="KW-1015">Disulfide bond</keyword>
<keyword id="KW-0456">Lyase</keyword>
<keyword id="KW-0460">Magnesium</keyword>
<keyword id="KW-0479">Metal-binding</keyword>
<keyword id="KW-0488">Methylation</keyword>
<keyword id="KW-0503">Monooxygenase</keyword>
<keyword id="KW-0560">Oxidoreductase</keyword>
<keyword id="KW-0601">Photorespiration</keyword>
<keyword id="KW-0602">Photosynthesis</keyword>
<keyword id="KW-0934">Plastid</keyword>
<accession>Q33443</accession>
<comment type="function">
    <text evidence="1">RuBisCO catalyzes two reactions: the carboxylation of D-ribulose 1,5-bisphosphate, the primary event in carbon dioxide fixation, as well as the oxidative fragmentation of the pentose substrate in the photorespiration process. Both reactions occur simultaneously and in competition at the same active site.</text>
</comment>
<comment type="catalytic activity">
    <reaction evidence="1">
        <text>2 (2R)-3-phosphoglycerate + 2 H(+) = D-ribulose 1,5-bisphosphate + CO2 + H2O</text>
        <dbReference type="Rhea" id="RHEA:23124"/>
        <dbReference type="ChEBI" id="CHEBI:15377"/>
        <dbReference type="ChEBI" id="CHEBI:15378"/>
        <dbReference type="ChEBI" id="CHEBI:16526"/>
        <dbReference type="ChEBI" id="CHEBI:57870"/>
        <dbReference type="ChEBI" id="CHEBI:58272"/>
        <dbReference type="EC" id="4.1.1.39"/>
    </reaction>
</comment>
<comment type="catalytic activity">
    <reaction evidence="1">
        <text>D-ribulose 1,5-bisphosphate + O2 = 2-phosphoglycolate + (2R)-3-phosphoglycerate + 2 H(+)</text>
        <dbReference type="Rhea" id="RHEA:36631"/>
        <dbReference type="ChEBI" id="CHEBI:15378"/>
        <dbReference type="ChEBI" id="CHEBI:15379"/>
        <dbReference type="ChEBI" id="CHEBI:57870"/>
        <dbReference type="ChEBI" id="CHEBI:58033"/>
        <dbReference type="ChEBI" id="CHEBI:58272"/>
    </reaction>
</comment>
<comment type="cofactor">
    <cofactor evidence="1">
        <name>Mg(2+)</name>
        <dbReference type="ChEBI" id="CHEBI:18420"/>
    </cofactor>
    <text evidence="1">Binds 1 Mg(2+) ion per subunit.</text>
</comment>
<comment type="subunit">
    <text evidence="1">Heterohexadecamer of 8 large chains and 8 small chains; disulfide-linked. The disulfide link is formed within the large subunit homodimers.</text>
</comment>
<comment type="subcellular location">
    <subcellularLocation>
        <location>Plastid</location>
        <location>Chloroplast</location>
    </subcellularLocation>
</comment>
<comment type="PTM">
    <text evidence="1">The disulfide bond which can form in the large chain dimeric partners within the hexadecamer appears to be associated with oxidative stress and protein turnover.</text>
</comment>
<comment type="miscellaneous">
    <text evidence="1">The basic functional RuBisCO is composed of a large chain homodimer in a 'head-to-tail' conformation. In form I RuBisCO this homodimer is arranged in a barrel-like tetramer with the small subunits forming a tetrameric 'cap' on each end of the 'barrel'.</text>
</comment>
<comment type="similarity">
    <text evidence="1">Belongs to the RuBisCO large chain family. Type I subfamily.</text>
</comment>
<geneLocation type="chloroplast"/>
<organism>
    <name type="scientific">Eremothamnus marlothianus</name>
    <dbReference type="NCBI Taxonomy" id="41573"/>
    <lineage>
        <taxon>Eukaryota</taxon>
        <taxon>Viridiplantae</taxon>
        <taxon>Streptophyta</taxon>
        <taxon>Embryophyta</taxon>
        <taxon>Tracheophyta</taxon>
        <taxon>Spermatophyta</taxon>
        <taxon>Magnoliopsida</taxon>
        <taxon>eudicotyledons</taxon>
        <taxon>Gunneridae</taxon>
        <taxon>Pentapetalae</taxon>
        <taxon>asterids</taxon>
        <taxon>campanulids</taxon>
        <taxon>Asterales</taxon>
        <taxon>Asteraceae</taxon>
        <taxon>Vernonioideae</taxon>
        <taxon>Eremothamneae</taxon>
        <taxon>Eremothamnus</taxon>
    </lineage>
</organism>
<feature type="chain" id="PRO_0000062460" description="Ribulose bisphosphate carboxylase large chain">
    <location>
        <begin position="1" status="less than"/>
        <end position="466"/>
    </location>
</feature>
<feature type="active site" description="Proton acceptor" evidence="1">
    <location>
        <position position="166"/>
    </location>
</feature>
<feature type="active site" description="Proton acceptor" evidence="1">
    <location>
        <position position="285"/>
    </location>
</feature>
<feature type="binding site" description="in homodimeric partner" evidence="1">
    <location>
        <position position="114"/>
    </location>
    <ligand>
        <name>substrate</name>
    </ligand>
</feature>
<feature type="binding site" evidence="1">
    <location>
        <position position="164"/>
    </location>
    <ligand>
        <name>substrate</name>
    </ligand>
</feature>
<feature type="binding site" evidence="1">
    <location>
        <position position="168"/>
    </location>
    <ligand>
        <name>substrate</name>
    </ligand>
</feature>
<feature type="binding site" description="via carbamate group" evidence="1">
    <location>
        <position position="192"/>
    </location>
    <ligand>
        <name>Mg(2+)</name>
        <dbReference type="ChEBI" id="CHEBI:18420"/>
    </ligand>
</feature>
<feature type="binding site" evidence="1">
    <location>
        <position position="194"/>
    </location>
    <ligand>
        <name>Mg(2+)</name>
        <dbReference type="ChEBI" id="CHEBI:18420"/>
    </ligand>
</feature>
<feature type="binding site" evidence="1">
    <location>
        <position position="195"/>
    </location>
    <ligand>
        <name>Mg(2+)</name>
        <dbReference type="ChEBI" id="CHEBI:18420"/>
    </ligand>
</feature>
<feature type="binding site" evidence="1">
    <location>
        <position position="286"/>
    </location>
    <ligand>
        <name>substrate</name>
    </ligand>
</feature>
<feature type="binding site" evidence="1">
    <location>
        <position position="318"/>
    </location>
    <ligand>
        <name>substrate</name>
    </ligand>
</feature>
<feature type="binding site" evidence="1">
    <location>
        <position position="370"/>
    </location>
    <ligand>
        <name>substrate</name>
    </ligand>
</feature>
<feature type="site" description="Transition state stabilizer" evidence="1">
    <location>
        <position position="325"/>
    </location>
</feature>
<feature type="modified residue" description="N6,N6,N6-trimethyllysine" evidence="1">
    <location>
        <position position="5"/>
    </location>
</feature>
<feature type="modified residue" description="N6-carboxylysine" evidence="1">
    <location>
        <position position="192"/>
    </location>
</feature>
<feature type="disulfide bond" description="Interchain; in linked form" evidence="1">
    <location>
        <position position="238"/>
    </location>
</feature>
<feature type="non-terminal residue">
    <location>
        <position position="1"/>
    </location>
</feature>
<reference key="1">
    <citation type="journal article" date="1995" name="Taxon">
        <title>Chloroplast DNA variation and the tribal position of Eremothamnus (Asteraceae).</title>
        <authorList>
            <person name="Bergqvist G."/>
            <person name="Bremer B."/>
            <person name="Bremer K."/>
        </authorList>
    </citation>
    <scope>NUCLEOTIDE SEQUENCE [GENOMIC DNA]</scope>
</reference>
<dbReference type="EC" id="4.1.1.39" evidence="1"/>
<dbReference type="EMBL" id="X89516">
    <property type="protein sequence ID" value="CAA61708.1"/>
    <property type="molecule type" value="Genomic_DNA"/>
</dbReference>
<dbReference type="SMR" id="Q33443"/>
<dbReference type="GO" id="GO:0009507">
    <property type="term" value="C:chloroplast"/>
    <property type="evidence" value="ECO:0007669"/>
    <property type="project" value="UniProtKB-SubCell"/>
</dbReference>
<dbReference type="GO" id="GO:0000287">
    <property type="term" value="F:magnesium ion binding"/>
    <property type="evidence" value="ECO:0007669"/>
    <property type="project" value="InterPro"/>
</dbReference>
<dbReference type="GO" id="GO:0004497">
    <property type="term" value="F:monooxygenase activity"/>
    <property type="evidence" value="ECO:0007669"/>
    <property type="project" value="UniProtKB-KW"/>
</dbReference>
<dbReference type="GO" id="GO:0016984">
    <property type="term" value="F:ribulose-bisphosphate carboxylase activity"/>
    <property type="evidence" value="ECO:0007669"/>
    <property type="project" value="UniProtKB-EC"/>
</dbReference>
<dbReference type="GO" id="GO:0009853">
    <property type="term" value="P:photorespiration"/>
    <property type="evidence" value="ECO:0007669"/>
    <property type="project" value="UniProtKB-KW"/>
</dbReference>
<dbReference type="GO" id="GO:0019253">
    <property type="term" value="P:reductive pentose-phosphate cycle"/>
    <property type="evidence" value="ECO:0007669"/>
    <property type="project" value="UniProtKB-KW"/>
</dbReference>
<dbReference type="CDD" id="cd08212">
    <property type="entry name" value="RuBisCO_large_I"/>
    <property type="match status" value="1"/>
</dbReference>
<dbReference type="FunFam" id="3.20.20.110:FF:000001">
    <property type="entry name" value="Ribulose bisphosphate carboxylase large chain"/>
    <property type="match status" value="1"/>
</dbReference>
<dbReference type="FunFam" id="3.30.70.150:FF:000001">
    <property type="entry name" value="Ribulose bisphosphate carboxylase large chain"/>
    <property type="match status" value="1"/>
</dbReference>
<dbReference type="Gene3D" id="3.20.20.110">
    <property type="entry name" value="Ribulose bisphosphate carboxylase, large subunit, C-terminal domain"/>
    <property type="match status" value="1"/>
</dbReference>
<dbReference type="Gene3D" id="3.30.70.150">
    <property type="entry name" value="RuBisCO large subunit, N-terminal domain"/>
    <property type="match status" value="1"/>
</dbReference>
<dbReference type="HAMAP" id="MF_01338">
    <property type="entry name" value="RuBisCO_L_type1"/>
    <property type="match status" value="1"/>
</dbReference>
<dbReference type="InterPro" id="IPR033966">
    <property type="entry name" value="RuBisCO"/>
</dbReference>
<dbReference type="InterPro" id="IPR020878">
    <property type="entry name" value="RuBisCo_large_chain_AS"/>
</dbReference>
<dbReference type="InterPro" id="IPR000685">
    <property type="entry name" value="RuBisCO_lsu_C"/>
</dbReference>
<dbReference type="InterPro" id="IPR036376">
    <property type="entry name" value="RuBisCO_lsu_C_sf"/>
</dbReference>
<dbReference type="InterPro" id="IPR017443">
    <property type="entry name" value="RuBisCO_lsu_fd_N"/>
</dbReference>
<dbReference type="InterPro" id="IPR036422">
    <property type="entry name" value="RuBisCO_lsu_N_sf"/>
</dbReference>
<dbReference type="InterPro" id="IPR020888">
    <property type="entry name" value="RuBisCO_lsuI"/>
</dbReference>
<dbReference type="NCBIfam" id="NF003252">
    <property type="entry name" value="PRK04208.1"/>
    <property type="match status" value="1"/>
</dbReference>
<dbReference type="PANTHER" id="PTHR42704">
    <property type="entry name" value="RIBULOSE BISPHOSPHATE CARBOXYLASE"/>
    <property type="match status" value="1"/>
</dbReference>
<dbReference type="PANTHER" id="PTHR42704:SF15">
    <property type="entry name" value="RIBULOSE BISPHOSPHATE CARBOXYLASE LARGE CHAIN"/>
    <property type="match status" value="1"/>
</dbReference>
<dbReference type="Pfam" id="PF00016">
    <property type="entry name" value="RuBisCO_large"/>
    <property type="match status" value="1"/>
</dbReference>
<dbReference type="Pfam" id="PF02788">
    <property type="entry name" value="RuBisCO_large_N"/>
    <property type="match status" value="1"/>
</dbReference>
<dbReference type="SFLD" id="SFLDG01052">
    <property type="entry name" value="RuBisCO"/>
    <property type="match status" value="1"/>
</dbReference>
<dbReference type="SFLD" id="SFLDS00014">
    <property type="entry name" value="RuBisCO"/>
    <property type="match status" value="1"/>
</dbReference>
<dbReference type="SFLD" id="SFLDG00301">
    <property type="entry name" value="RuBisCO-like_proteins"/>
    <property type="match status" value="1"/>
</dbReference>
<dbReference type="SUPFAM" id="SSF51649">
    <property type="entry name" value="RuBisCo, C-terminal domain"/>
    <property type="match status" value="1"/>
</dbReference>
<dbReference type="SUPFAM" id="SSF54966">
    <property type="entry name" value="RuBisCO, large subunit, small (N-terminal) domain"/>
    <property type="match status" value="1"/>
</dbReference>
<dbReference type="PROSITE" id="PS00157">
    <property type="entry name" value="RUBISCO_LARGE"/>
    <property type="match status" value="1"/>
</dbReference>
<name>RBL_EREMA</name>
<sequence length="466" mass="51573">SVGFKAGVKDYKLTYYTPDYETKDTDILAAFRVTPQPGVPPEEAGAAVAAESSTGTWTTVWTDGLTSLDRYKGRCYGIEPVPGEESQFIAYVAYPLDLFEEGSVTNMFTSIVGNVFGFKALRALRLEDLRIPTAYVKTFQGPPHGIQVERDKLNKYGRPLLGCTIKPKLGLSAKNYGRAVYECLRGGLDFTKDDENVNSQPFMRWRDRFLFCAEALYKAQAETGEIKGHYLNATAGTCEEMMKRAIFARELGVPIVMHDYLTGGFTANTSLAHYCRDNGLLLHIHRAMHAVIDRQKNHGIHFRVLAKALRMSGGDHIHSGTVVGKLEGERDITLGFVDLLRDDFIEKDRSRGIYFTQDWVSLPGVLPVASGGIHVWHMPALTEIFGDDSVLQFGGGTLGHPWGNAPGAVANRVALEACVQARNEGRDLAVEGNEIIREATKWSPELAAACEVWKEIKFEFQAVDTI</sequence>
<protein>
    <recommendedName>
        <fullName evidence="1">Ribulose bisphosphate carboxylase large chain</fullName>
        <shortName evidence="1">RuBisCO large subunit</shortName>
        <ecNumber evidence="1">4.1.1.39</ecNumber>
    </recommendedName>
</protein>